<gene>
    <name evidence="1" type="primary">psbB</name>
</gene>
<organism>
    <name type="scientific">Lepidium virginicum</name>
    <name type="common">Virginia pepperweed</name>
    <dbReference type="NCBI Taxonomy" id="59292"/>
    <lineage>
        <taxon>Eukaryota</taxon>
        <taxon>Viridiplantae</taxon>
        <taxon>Streptophyta</taxon>
        <taxon>Embryophyta</taxon>
        <taxon>Tracheophyta</taxon>
        <taxon>Spermatophyta</taxon>
        <taxon>Magnoliopsida</taxon>
        <taxon>eudicotyledons</taxon>
        <taxon>Gunneridae</taxon>
        <taxon>Pentapetalae</taxon>
        <taxon>rosids</taxon>
        <taxon>malvids</taxon>
        <taxon>Brassicales</taxon>
        <taxon>Brassicaceae</taxon>
        <taxon>Lepidieae</taxon>
        <taxon>Lepidium</taxon>
    </lineage>
</organism>
<name>PSBB_LEPVR</name>
<reference key="1">
    <citation type="submission" date="2007-03" db="EMBL/GenBank/DDBJ databases">
        <title>Sequencing analysis of Lepidium virginicum JO26 chloroplast DNA.</title>
        <authorList>
            <person name="Hosouchi T."/>
            <person name="Tsuruoka H."/>
            <person name="Kotani H."/>
        </authorList>
    </citation>
    <scope>NUCLEOTIDE SEQUENCE [LARGE SCALE GENOMIC DNA]</scope>
</reference>
<feature type="chain" id="PRO_0000359835" description="Photosystem II CP47 reaction center protein">
    <location>
        <begin position="1"/>
        <end position="508"/>
    </location>
</feature>
<feature type="transmembrane region" description="Helical" evidence="1">
    <location>
        <begin position="21"/>
        <end position="36"/>
    </location>
</feature>
<feature type="transmembrane region" description="Helical" evidence="1">
    <location>
        <begin position="101"/>
        <end position="115"/>
    </location>
</feature>
<feature type="transmembrane region" description="Helical" evidence="1">
    <location>
        <begin position="140"/>
        <end position="156"/>
    </location>
</feature>
<feature type="transmembrane region" description="Helical" evidence="1">
    <location>
        <begin position="203"/>
        <end position="218"/>
    </location>
</feature>
<feature type="transmembrane region" description="Helical" evidence="1">
    <location>
        <begin position="237"/>
        <end position="252"/>
    </location>
</feature>
<feature type="transmembrane region" description="Helical" evidence="1">
    <location>
        <begin position="457"/>
        <end position="472"/>
    </location>
</feature>
<sequence>MGLPWYRVHTVVLNDPGRLLSVHIMHTALVAGWAGSMALYELAVFDPSDPVLDPMWRQGMFVIPFMTRLGITNSWGGWNITGGTITNPGLWSYEGVAGAHIVFSGLCFLAAIWHWVYWDLEIFCDERTGKPSLDLPKIFGIHLFLSGVACFGFGAFHVTGLYGPGIWVSDPYGLTGKVQPVNPAWGVEGFDPFVPGGIASHHIAAGTLGILAGLFHLSVRPPQRLYKGLRMGNIETVLSSSIAAVFFAAFVVAGTMWYGSATTPIELFGPTRYQWDQGYFQQEIYRRVSAGLAENQSLSEAWSKIPEKLAFYDYIGNNPAKGGLFRAGSMDNGDGIAVGWLGHPVFRNKEGRELFVRRMPTFFETFPVVLVDGDGIVRADVPFRRAESKYSVEQVGVTVEFYGGELNGVSYSDPATVKKYARRAQLGEIFELDRATLKSDGVFRSSPRGWFTFGHASFALLFFFGHIWHGSRTLFRDVFAGIDPDLDAQVEFGAFQKLGDPTTKRQAV</sequence>
<protein>
    <recommendedName>
        <fullName evidence="1">Photosystem II CP47 reaction center protein</fullName>
    </recommendedName>
    <alternativeName>
        <fullName evidence="1">PSII 47 kDa protein</fullName>
    </alternativeName>
    <alternativeName>
        <fullName evidence="1">Protein CP-47</fullName>
    </alternativeName>
</protein>
<dbReference type="EMBL" id="AP009374">
    <property type="protein sequence ID" value="BAF50487.1"/>
    <property type="molecule type" value="Genomic_DNA"/>
</dbReference>
<dbReference type="RefSeq" id="YP_001123663.1">
    <property type="nucleotide sequence ID" value="NC_009273.1"/>
</dbReference>
<dbReference type="SMR" id="A4QLD2"/>
<dbReference type="GeneID" id="4962037"/>
<dbReference type="GO" id="GO:0009535">
    <property type="term" value="C:chloroplast thylakoid membrane"/>
    <property type="evidence" value="ECO:0007669"/>
    <property type="project" value="UniProtKB-SubCell"/>
</dbReference>
<dbReference type="GO" id="GO:0009523">
    <property type="term" value="C:photosystem II"/>
    <property type="evidence" value="ECO:0007669"/>
    <property type="project" value="UniProtKB-KW"/>
</dbReference>
<dbReference type="GO" id="GO:0016168">
    <property type="term" value="F:chlorophyll binding"/>
    <property type="evidence" value="ECO:0007669"/>
    <property type="project" value="UniProtKB-UniRule"/>
</dbReference>
<dbReference type="GO" id="GO:0045156">
    <property type="term" value="F:electron transporter, transferring electrons within the cyclic electron transport pathway of photosynthesis activity"/>
    <property type="evidence" value="ECO:0007669"/>
    <property type="project" value="InterPro"/>
</dbReference>
<dbReference type="GO" id="GO:0009772">
    <property type="term" value="P:photosynthetic electron transport in photosystem II"/>
    <property type="evidence" value="ECO:0007669"/>
    <property type="project" value="InterPro"/>
</dbReference>
<dbReference type="FunFam" id="3.10.680.10:FF:000001">
    <property type="entry name" value="Photosystem II CP47 reaction center protein"/>
    <property type="match status" value="1"/>
</dbReference>
<dbReference type="Gene3D" id="3.10.680.10">
    <property type="entry name" value="Photosystem II CP47 reaction center protein"/>
    <property type="match status" value="1"/>
</dbReference>
<dbReference type="HAMAP" id="MF_01495">
    <property type="entry name" value="PSII_PsbB_CP47"/>
    <property type="match status" value="1"/>
</dbReference>
<dbReference type="InterPro" id="IPR000932">
    <property type="entry name" value="PS_antenna-like"/>
</dbReference>
<dbReference type="InterPro" id="IPR036001">
    <property type="entry name" value="PS_II_antenna-like_sf"/>
</dbReference>
<dbReference type="InterPro" id="IPR017486">
    <property type="entry name" value="PSII_PsbB"/>
</dbReference>
<dbReference type="NCBIfam" id="TIGR03039">
    <property type="entry name" value="PS_II_CP47"/>
    <property type="match status" value="1"/>
</dbReference>
<dbReference type="PANTHER" id="PTHR33180">
    <property type="entry name" value="PHOTOSYSTEM II CP43 REACTION CENTER PROTEIN"/>
    <property type="match status" value="1"/>
</dbReference>
<dbReference type="PANTHER" id="PTHR33180:SF38">
    <property type="entry name" value="PHOTOSYSTEM II CP47 REACTION CENTER PROTEIN"/>
    <property type="match status" value="1"/>
</dbReference>
<dbReference type="Pfam" id="PF00421">
    <property type="entry name" value="PSII"/>
    <property type="match status" value="1"/>
</dbReference>
<dbReference type="SUPFAM" id="SSF161077">
    <property type="entry name" value="Photosystem II antenna protein-like"/>
    <property type="match status" value="1"/>
</dbReference>
<proteinExistence type="inferred from homology"/>
<comment type="function">
    <text evidence="1">One of the components of the core complex of photosystem II (PSII). It binds chlorophyll and helps catalyze the primary light-induced photochemical processes of PSII. PSII is a light-driven water:plastoquinone oxidoreductase, using light energy to abstract electrons from H(2)O, generating O(2) and a proton gradient subsequently used for ATP formation.</text>
</comment>
<comment type="cofactor">
    <text evidence="1">Binds multiple chlorophylls. PSII binds additional chlorophylls, carotenoids and specific lipids.</text>
</comment>
<comment type="subunit">
    <text evidence="1">PSII is composed of 1 copy each of membrane proteins PsbA, PsbB, PsbC, PsbD, PsbE, PsbF, PsbH, PsbI, PsbJ, PsbK, PsbL, PsbM, PsbT, PsbX, PsbY, PsbZ, Psb30/Ycf12, at least 3 peripheral proteins of the oxygen-evolving complex and a large number of cofactors. It forms dimeric complexes.</text>
</comment>
<comment type="subcellular location">
    <subcellularLocation>
        <location evidence="1">Plastid</location>
        <location evidence="1">Chloroplast thylakoid membrane</location>
        <topology evidence="1">Multi-pass membrane protein</topology>
    </subcellularLocation>
</comment>
<comment type="similarity">
    <text evidence="1">Belongs to the PsbB/PsbC family. PsbB subfamily.</text>
</comment>
<accession>A4QLD2</accession>
<keyword id="KW-0148">Chlorophyll</keyword>
<keyword id="KW-0150">Chloroplast</keyword>
<keyword id="KW-0157">Chromophore</keyword>
<keyword id="KW-0472">Membrane</keyword>
<keyword id="KW-0602">Photosynthesis</keyword>
<keyword id="KW-0604">Photosystem II</keyword>
<keyword id="KW-0934">Plastid</keyword>
<keyword id="KW-0793">Thylakoid</keyword>
<keyword id="KW-0812">Transmembrane</keyword>
<keyword id="KW-1133">Transmembrane helix</keyword>
<geneLocation type="chloroplast"/>
<evidence type="ECO:0000255" key="1">
    <source>
        <dbReference type="HAMAP-Rule" id="MF_01495"/>
    </source>
</evidence>